<name>CHEB1_PSESM</name>
<gene>
    <name evidence="1" type="primary">cheB1</name>
    <name type="synonym">cheB2</name>
    <name type="ordered locus">PSPTO_1983</name>
</gene>
<dbReference type="EC" id="3.1.1.61" evidence="1"/>
<dbReference type="EC" id="3.5.1.44" evidence="1"/>
<dbReference type="EMBL" id="AE016853">
    <property type="protein sequence ID" value="AAO55501.1"/>
    <property type="molecule type" value="Genomic_DNA"/>
</dbReference>
<dbReference type="RefSeq" id="NP_791806.1">
    <property type="nucleotide sequence ID" value="NC_004578.1"/>
</dbReference>
<dbReference type="RefSeq" id="WP_010207872.1">
    <property type="nucleotide sequence ID" value="NC_004578.1"/>
</dbReference>
<dbReference type="SMR" id="Q884V3"/>
<dbReference type="STRING" id="223283.PSPTO_1983"/>
<dbReference type="GeneID" id="1183628"/>
<dbReference type="KEGG" id="pst:PSPTO_1983"/>
<dbReference type="PATRIC" id="fig|223283.9.peg.2012"/>
<dbReference type="eggNOG" id="COG2201">
    <property type="taxonomic scope" value="Bacteria"/>
</dbReference>
<dbReference type="HOGENOM" id="CLU_000445_51_0_6"/>
<dbReference type="OrthoDB" id="9793421at2"/>
<dbReference type="PhylomeDB" id="Q884V3"/>
<dbReference type="Proteomes" id="UP000002515">
    <property type="component" value="Chromosome"/>
</dbReference>
<dbReference type="GO" id="GO:0005737">
    <property type="term" value="C:cytoplasm"/>
    <property type="evidence" value="ECO:0007669"/>
    <property type="project" value="UniProtKB-SubCell"/>
</dbReference>
<dbReference type="GO" id="GO:0000156">
    <property type="term" value="F:phosphorelay response regulator activity"/>
    <property type="evidence" value="ECO:0007669"/>
    <property type="project" value="InterPro"/>
</dbReference>
<dbReference type="GO" id="GO:0008984">
    <property type="term" value="F:protein-glutamate methylesterase activity"/>
    <property type="evidence" value="ECO:0007669"/>
    <property type="project" value="UniProtKB-UniRule"/>
</dbReference>
<dbReference type="GO" id="GO:0050568">
    <property type="term" value="F:protein-glutamine glutaminase activity"/>
    <property type="evidence" value="ECO:0007669"/>
    <property type="project" value="UniProtKB-UniRule"/>
</dbReference>
<dbReference type="GO" id="GO:0006935">
    <property type="term" value="P:chemotaxis"/>
    <property type="evidence" value="ECO:0007669"/>
    <property type="project" value="UniProtKB-UniRule"/>
</dbReference>
<dbReference type="CDD" id="cd16432">
    <property type="entry name" value="CheB_Rec"/>
    <property type="match status" value="1"/>
</dbReference>
<dbReference type="CDD" id="cd17541">
    <property type="entry name" value="REC_CheB-like"/>
    <property type="match status" value="1"/>
</dbReference>
<dbReference type="FunFam" id="3.40.50.2300:FF:000077">
    <property type="entry name" value="Chemotaxis response regulator"/>
    <property type="match status" value="1"/>
</dbReference>
<dbReference type="FunFam" id="3.40.50.180:FF:000001">
    <property type="entry name" value="Protein-glutamate methylesterase/protein-glutamine glutaminase"/>
    <property type="match status" value="1"/>
</dbReference>
<dbReference type="Gene3D" id="3.40.50.2300">
    <property type="match status" value="1"/>
</dbReference>
<dbReference type="Gene3D" id="3.40.50.180">
    <property type="entry name" value="Methylesterase CheB, C-terminal domain"/>
    <property type="match status" value="1"/>
</dbReference>
<dbReference type="HAMAP" id="MF_00099">
    <property type="entry name" value="CheB_chemtxs"/>
    <property type="match status" value="1"/>
</dbReference>
<dbReference type="InterPro" id="IPR008248">
    <property type="entry name" value="CheB-like"/>
</dbReference>
<dbReference type="InterPro" id="IPR035909">
    <property type="entry name" value="CheB_C"/>
</dbReference>
<dbReference type="InterPro" id="IPR011006">
    <property type="entry name" value="CheY-like_superfamily"/>
</dbReference>
<dbReference type="InterPro" id="IPR000673">
    <property type="entry name" value="Sig_transdc_resp-reg_Me-estase"/>
</dbReference>
<dbReference type="InterPro" id="IPR001789">
    <property type="entry name" value="Sig_transdc_resp-reg_receiver"/>
</dbReference>
<dbReference type="NCBIfam" id="NF001965">
    <property type="entry name" value="PRK00742.1"/>
    <property type="match status" value="1"/>
</dbReference>
<dbReference type="PANTHER" id="PTHR42872">
    <property type="entry name" value="PROTEIN-GLUTAMATE METHYLESTERASE/PROTEIN-GLUTAMINE GLUTAMINASE"/>
    <property type="match status" value="1"/>
</dbReference>
<dbReference type="PANTHER" id="PTHR42872:SF3">
    <property type="entry name" value="PROTEIN-GLUTAMATE METHYLESTERASE_PROTEIN-GLUTAMINE GLUTAMINASE 1"/>
    <property type="match status" value="1"/>
</dbReference>
<dbReference type="Pfam" id="PF01339">
    <property type="entry name" value="CheB_methylest"/>
    <property type="match status" value="1"/>
</dbReference>
<dbReference type="Pfam" id="PF00072">
    <property type="entry name" value="Response_reg"/>
    <property type="match status" value="1"/>
</dbReference>
<dbReference type="PIRSF" id="PIRSF000876">
    <property type="entry name" value="RR_chemtxs_CheB"/>
    <property type="match status" value="1"/>
</dbReference>
<dbReference type="SMART" id="SM00448">
    <property type="entry name" value="REC"/>
    <property type="match status" value="1"/>
</dbReference>
<dbReference type="SUPFAM" id="SSF52172">
    <property type="entry name" value="CheY-like"/>
    <property type="match status" value="1"/>
</dbReference>
<dbReference type="SUPFAM" id="SSF52738">
    <property type="entry name" value="Methylesterase CheB, C-terminal domain"/>
    <property type="match status" value="1"/>
</dbReference>
<dbReference type="PROSITE" id="PS50122">
    <property type="entry name" value="CHEB"/>
    <property type="match status" value="1"/>
</dbReference>
<dbReference type="PROSITE" id="PS50110">
    <property type="entry name" value="RESPONSE_REGULATORY"/>
    <property type="match status" value="1"/>
</dbReference>
<protein>
    <recommendedName>
        <fullName evidence="1">Protein-glutamate methylesterase/protein-glutamine glutaminase 1</fullName>
        <ecNumber evidence="1">3.1.1.61</ecNumber>
        <ecNumber evidence="1">3.5.1.44</ecNumber>
    </recommendedName>
</protein>
<sequence length="390" mass="41100">MAVKVLVVDDSGFFRRRVTEILSSDPNIVVVGTATNGKEAIEQALALKPDVITMDYEMPMMDGITAVRHIMQRIPTPVLMFSSLTHEGARVTLDALDAGAVDFLPKNFEDISRNPQKVKQLLCEKINSISRSNRRSSGIGSASAASPAPAAPAPSTLSSRAPAPSAAAPARAVPSRTVAPAAAPAAHAHHTPAHPTTTGTAKRKAYKLVAIGTSTGGPVALQRVLTQLPANFPAPLVLIQHMPAAFTKAFAERLDKLCKISVKEAEDGDVLRPGLALLAPGGKQMMVDSRGTVKILPGDERLNYKPCVDITFGSAAKSYGDKVLSVVLTGMGADGREGARLLKQVGSTVWAQDEASCVIYGMPMAIVKAELADAIYSLDDIGRHLVEACL</sequence>
<organism>
    <name type="scientific">Pseudomonas syringae pv. tomato (strain ATCC BAA-871 / DC3000)</name>
    <dbReference type="NCBI Taxonomy" id="223283"/>
    <lineage>
        <taxon>Bacteria</taxon>
        <taxon>Pseudomonadati</taxon>
        <taxon>Pseudomonadota</taxon>
        <taxon>Gammaproteobacteria</taxon>
        <taxon>Pseudomonadales</taxon>
        <taxon>Pseudomonadaceae</taxon>
        <taxon>Pseudomonas</taxon>
    </lineage>
</organism>
<comment type="function">
    <text evidence="1">Involved in chemotaxis. Part of a chemotaxis signal transduction system that modulates chemotaxis in response to various stimuli. Catalyzes the demethylation of specific methylglutamate residues introduced into the chemoreceptors (methyl-accepting chemotaxis proteins or MCP) by CheR. Also mediates the irreversible deamidation of specific glutamine residues to glutamic acid.</text>
</comment>
<comment type="catalytic activity">
    <reaction evidence="1">
        <text>[protein]-L-glutamate 5-O-methyl ester + H2O = L-glutamyl-[protein] + methanol + H(+)</text>
        <dbReference type="Rhea" id="RHEA:23236"/>
        <dbReference type="Rhea" id="RHEA-COMP:10208"/>
        <dbReference type="Rhea" id="RHEA-COMP:10311"/>
        <dbReference type="ChEBI" id="CHEBI:15377"/>
        <dbReference type="ChEBI" id="CHEBI:15378"/>
        <dbReference type="ChEBI" id="CHEBI:17790"/>
        <dbReference type="ChEBI" id="CHEBI:29973"/>
        <dbReference type="ChEBI" id="CHEBI:82795"/>
        <dbReference type="EC" id="3.1.1.61"/>
    </reaction>
</comment>
<comment type="catalytic activity">
    <reaction evidence="1">
        <text>L-glutaminyl-[protein] + H2O = L-glutamyl-[protein] + NH4(+)</text>
        <dbReference type="Rhea" id="RHEA:16441"/>
        <dbReference type="Rhea" id="RHEA-COMP:10207"/>
        <dbReference type="Rhea" id="RHEA-COMP:10208"/>
        <dbReference type="ChEBI" id="CHEBI:15377"/>
        <dbReference type="ChEBI" id="CHEBI:28938"/>
        <dbReference type="ChEBI" id="CHEBI:29973"/>
        <dbReference type="ChEBI" id="CHEBI:30011"/>
        <dbReference type="EC" id="3.5.1.44"/>
    </reaction>
</comment>
<comment type="subcellular location">
    <subcellularLocation>
        <location evidence="1">Cytoplasm</location>
    </subcellularLocation>
</comment>
<comment type="domain">
    <text evidence="1">Contains a C-terminal catalytic domain, and an N-terminal region which modulates catalytic activity.</text>
</comment>
<comment type="PTM">
    <text evidence="1">Phosphorylated by CheA. Phosphorylation of the N-terminal regulatory domain activates the methylesterase activity.</text>
</comment>
<comment type="similarity">
    <text evidence="1">Belongs to the CheB family.</text>
</comment>
<evidence type="ECO:0000255" key="1">
    <source>
        <dbReference type="HAMAP-Rule" id="MF_00099"/>
    </source>
</evidence>
<evidence type="ECO:0000256" key="2">
    <source>
        <dbReference type="SAM" id="MobiDB-lite"/>
    </source>
</evidence>
<reference key="1">
    <citation type="journal article" date="2003" name="Proc. Natl. Acad. Sci. U.S.A.">
        <title>The complete genome sequence of the Arabidopsis and tomato pathogen Pseudomonas syringae pv. tomato DC3000.</title>
        <authorList>
            <person name="Buell C.R."/>
            <person name="Joardar V."/>
            <person name="Lindeberg M."/>
            <person name="Selengut J."/>
            <person name="Paulsen I.T."/>
            <person name="Gwinn M.L."/>
            <person name="Dodson R.J."/>
            <person name="DeBoy R.T."/>
            <person name="Durkin A.S."/>
            <person name="Kolonay J.F."/>
            <person name="Madupu R."/>
            <person name="Daugherty S.C."/>
            <person name="Brinkac L.M."/>
            <person name="Beanan M.J."/>
            <person name="Haft D.H."/>
            <person name="Nelson W.C."/>
            <person name="Davidsen T.M."/>
            <person name="Zafar N."/>
            <person name="Zhou L."/>
            <person name="Liu J."/>
            <person name="Yuan Q."/>
            <person name="Khouri H.M."/>
            <person name="Fedorova N.B."/>
            <person name="Tran B."/>
            <person name="Russell D."/>
            <person name="Berry K.J."/>
            <person name="Utterback T.R."/>
            <person name="Van Aken S.E."/>
            <person name="Feldblyum T.V."/>
            <person name="D'Ascenzo M."/>
            <person name="Deng W.-L."/>
            <person name="Ramos A.R."/>
            <person name="Alfano J.R."/>
            <person name="Cartinhour S."/>
            <person name="Chatterjee A.K."/>
            <person name="Delaney T.P."/>
            <person name="Lazarowitz S.G."/>
            <person name="Martin G.B."/>
            <person name="Schneider D.J."/>
            <person name="Tang X."/>
            <person name="Bender C.L."/>
            <person name="White O."/>
            <person name="Fraser C.M."/>
            <person name="Collmer A."/>
        </authorList>
    </citation>
    <scope>NUCLEOTIDE SEQUENCE [LARGE SCALE GENOMIC DNA]</scope>
    <source>
        <strain>ATCC BAA-871 / DC3000</strain>
    </source>
</reference>
<feature type="chain" id="PRO_0000158014" description="Protein-glutamate methylesterase/protein-glutamine glutaminase 1">
    <location>
        <begin position="1"/>
        <end position="390"/>
    </location>
</feature>
<feature type="domain" description="Response regulatory" evidence="1">
    <location>
        <begin position="4"/>
        <end position="121"/>
    </location>
</feature>
<feature type="domain" description="CheB-type methylesterase" evidence="1">
    <location>
        <begin position="195"/>
        <end position="387"/>
    </location>
</feature>
<feature type="region of interest" description="Disordered" evidence="2">
    <location>
        <begin position="132"/>
        <end position="201"/>
    </location>
</feature>
<feature type="compositionally biased region" description="Low complexity" evidence="2">
    <location>
        <begin position="132"/>
        <end position="186"/>
    </location>
</feature>
<feature type="active site" evidence="1">
    <location>
        <position position="214"/>
    </location>
</feature>
<feature type="active site" evidence="1">
    <location>
        <position position="241"/>
    </location>
</feature>
<feature type="active site" evidence="1">
    <location>
        <position position="334"/>
    </location>
</feature>
<feature type="modified residue" description="4-aspartylphosphate" evidence="1">
    <location>
        <position position="55"/>
    </location>
</feature>
<proteinExistence type="inferred from homology"/>
<keyword id="KW-0145">Chemotaxis</keyword>
<keyword id="KW-0963">Cytoplasm</keyword>
<keyword id="KW-0378">Hydrolase</keyword>
<keyword id="KW-0597">Phosphoprotein</keyword>
<keyword id="KW-1185">Reference proteome</keyword>
<accession>Q884V3</accession>